<keyword id="KW-0963">Cytoplasm</keyword>
<keyword id="KW-0251">Elongation factor</keyword>
<keyword id="KW-0342">GTP-binding</keyword>
<keyword id="KW-0547">Nucleotide-binding</keyword>
<keyword id="KW-0648">Protein biosynthesis</keyword>
<keyword id="KW-1185">Reference proteome</keyword>
<proteinExistence type="inferred from homology"/>
<gene>
    <name evidence="1" type="primary">fusA</name>
    <name type="synonym">fus</name>
    <name type="ordered locus">CPE2408</name>
</gene>
<sequence length="688" mass="75987">MARQYPLEKFRNFGIMAHIDAGKTTTTERILFYTGRNHKIGETHDGASTMDWMAQEQERGITITSAATTCFWKGYELNIIDTPGHVDFTVEVERSLRVLDGAVTVLDAKSGVEPQTETVWRQADKYGVPRMIYVNKMDATGADYYNCINTVRERLQANAVAIQIPIGQEDQFQGMVDLLTNQAIIFKDDLGKDIEVGEVPADLADKAEEYRAAMIEAIAETDEELMMKYLEGEELTLEELKVALRKATINNEIIPVICGSSYKNKGVQQMIDGVVDYLPSPLDIPAVKGTNLDGEEEVREASDDAPMSALAFKIATDPFVGRLAFTRVYSGVLESGSYVLNSTKGKKERIGRLVKMHANSREEVESLEAAELGAVIGLKNTTTGDTLCTEAAPIILEKMEFPEPVISIAIEPKTKAGQEKMGIALSKLAEEDPTFKTWTDQETGQTIIAGMGELHLDIIVDRLQREFKVECNVGAPQVAYKETIKKAVEAEAKFARQSGGRGQYGHCKIEMIPTEGEYEFENAIVGGAIPREYIPAVDNGIREAAESGIIAGYPVINFKIRLFDGSYHDVDSSEMAFKIAGSMAFKNAMAKADAVLLEPIMKVEITVPEEYMGDVIGDVNSRRGRMEGMDSRNGAQIIRAFIPLSEMFGYATALRSRTQGRGTYAMEFDHYDDVPKSIQEEVAGKKNK</sequence>
<comment type="function">
    <text evidence="1">Catalyzes the GTP-dependent ribosomal translocation step during translation elongation. During this step, the ribosome changes from the pre-translocational (PRE) to the post-translocational (POST) state as the newly formed A-site-bound peptidyl-tRNA and P-site-bound deacylated tRNA move to the P and E sites, respectively. Catalyzes the coordinated movement of the two tRNA molecules, the mRNA and conformational changes in the ribosome.</text>
</comment>
<comment type="subcellular location">
    <subcellularLocation>
        <location evidence="1">Cytoplasm</location>
    </subcellularLocation>
</comment>
<comment type="similarity">
    <text evidence="1">Belongs to the TRAFAC class translation factor GTPase superfamily. Classic translation factor GTPase family. EF-G/EF-2 subfamily.</text>
</comment>
<accession>Q8XHS1</accession>
<reference key="1">
    <citation type="journal article" date="2002" name="Proc. Natl. Acad. Sci. U.S.A.">
        <title>Complete genome sequence of Clostridium perfringens, an anaerobic flesh-eater.</title>
        <authorList>
            <person name="Shimizu T."/>
            <person name="Ohtani K."/>
            <person name="Hirakawa H."/>
            <person name="Ohshima K."/>
            <person name="Yamashita A."/>
            <person name="Shiba T."/>
            <person name="Ogasawara N."/>
            <person name="Hattori M."/>
            <person name="Kuhara S."/>
            <person name="Hayashi H."/>
        </authorList>
    </citation>
    <scope>NUCLEOTIDE SEQUENCE [LARGE SCALE GENOMIC DNA]</scope>
    <source>
        <strain>13 / Type A</strain>
    </source>
</reference>
<organism>
    <name type="scientific">Clostridium perfringens (strain 13 / Type A)</name>
    <dbReference type="NCBI Taxonomy" id="195102"/>
    <lineage>
        <taxon>Bacteria</taxon>
        <taxon>Bacillati</taxon>
        <taxon>Bacillota</taxon>
        <taxon>Clostridia</taxon>
        <taxon>Eubacteriales</taxon>
        <taxon>Clostridiaceae</taxon>
        <taxon>Clostridium</taxon>
    </lineage>
</organism>
<dbReference type="EMBL" id="BA000016">
    <property type="protein sequence ID" value="BAB82114.1"/>
    <property type="molecule type" value="Genomic_DNA"/>
</dbReference>
<dbReference type="RefSeq" id="WP_003452179.1">
    <property type="nucleotide sequence ID" value="NC_003366.1"/>
</dbReference>
<dbReference type="SMR" id="Q8XHS1"/>
<dbReference type="STRING" id="195102.gene:10491725"/>
<dbReference type="KEGG" id="cpe:CPE2408"/>
<dbReference type="HOGENOM" id="CLU_002794_4_1_9"/>
<dbReference type="Proteomes" id="UP000000818">
    <property type="component" value="Chromosome"/>
</dbReference>
<dbReference type="GO" id="GO:0005737">
    <property type="term" value="C:cytoplasm"/>
    <property type="evidence" value="ECO:0007669"/>
    <property type="project" value="UniProtKB-SubCell"/>
</dbReference>
<dbReference type="GO" id="GO:0005525">
    <property type="term" value="F:GTP binding"/>
    <property type="evidence" value="ECO:0007669"/>
    <property type="project" value="UniProtKB-UniRule"/>
</dbReference>
<dbReference type="GO" id="GO:0003924">
    <property type="term" value="F:GTPase activity"/>
    <property type="evidence" value="ECO:0007669"/>
    <property type="project" value="InterPro"/>
</dbReference>
<dbReference type="GO" id="GO:0003746">
    <property type="term" value="F:translation elongation factor activity"/>
    <property type="evidence" value="ECO:0007669"/>
    <property type="project" value="UniProtKB-UniRule"/>
</dbReference>
<dbReference type="GO" id="GO:0032790">
    <property type="term" value="P:ribosome disassembly"/>
    <property type="evidence" value="ECO:0007669"/>
    <property type="project" value="TreeGrafter"/>
</dbReference>
<dbReference type="CDD" id="cd01886">
    <property type="entry name" value="EF-G"/>
    <property type="match status" value="1"/>
</dbReference>
<dbReference type="CDD" id="cd16262">
    <property type="entry name" value="EFG_III"/>
    <property type="match status" value="1"/>
</dbReference>
<dbReference type="CDD" id="cd01434">
    <property type="entry name" value="EFG_mtEFG1_IV"/>
    <property type="match status" value="1"/>
</dbReference>
<dbReference type="CDD" id="cd03713">
    <property type="entry name" value="EFG_mtEFG_C"/>
    <property type="match status" value="1"/>
</dbReference>
<dbReference type="CDD" id="cd04088">
    <property type="entry name" value="EFG_mtEFG_II"/>
    <property type="match status" value="1"/>
</dbReference>
<dbReference type="FunFam" id="2.40.30.10:FF:000006">
    <property type="entry name" value="Elongation factor G"/>
    <property type="match status" value="1"/>
</dbReference>
<dbReference type="FunFam" id="3.30.230.10:FF:000003">
    <property type="entry name" value="Elongation factor G"/>
    <property type="match status" value="1"/>
</dbReference>
<dbReference type="FunFam" id="3.30.70.240:FF:000001">
    <property type="entry name" value="Elongation factor G"/>
    <property type="match status" value="1"/>
</dbReference>
<dbReference type="FunFam" id="3.30.70.870:FF:000001">
    <property type="entry name" value="Elongation factor G"/>
    <property type="match status" value="1"/>
</dbReference>
<dbReference type="FunFam" id="3.40.50.300:FF:000029">
    <property type="entry name" value="Elongation factor G"/>
    <property type="match status" value="1"/>
</dbReference>
<dbReference type="Gene3D" id="3.30.230.10">
    <property type="match status" value="1"/>
</dbReference>
<dbReference type="Gene3D" id="3.30.70.240">
    <property type="match status" value="1"/>
</dbReference>
<dbReference type="Gene3D" id="3.30.70.870">
    <property type="entry name" value="Elongation Factor G (Translational Gtpase), domain 3"/>
    <property type="match status" value="1"/>
</dbReference>
<dbReference type="Gene3D" id="3.40.50.300">
    <property type="entry name" value="P-loop containing nucleotide triphosphate hydrolases"/>
    <property type="match status" value="1"/>
</dbReference>
<dbReference type="Gene3D" id="2.40.30.10">
    <property type="entry name" value="Translation factors"/>
    <property type="match status" value="1"/>
</dbReference>
<dbReference type="HAMAP" id="MF_00054_B">
    <property type="entry name" value="EF_G_EF_2_B"/>
    <property type="match status" value="1"/>
</dbReference>
<dbReference type="InterPro" id="IPR053905">
    <property type="entry name" value="EF-G-like_DII"/>
</dbReference>
<dbReference type="InterPro" id="IPR041095">
    <property type="entry name" value="EFG_II"/>
</dbReference>
<dbReference type="InterPro" id="IPR009022">
    <property type="entry name" value="EFG_III"/>
</dbReference>
<dbReference type="InterPro" id="IPR035647">
    <property type="entry name" value="EFG_III/V"/>
</dbReference>
<dbReference type="InterPro" id="IPR047872">
    <property type="entry name" value="EFG_IV"/>
</dbReference>
<dbReference type="InterPro" id="IPR035649">
    <property type="entry name" value="EFG_V"/>
</dbReference>
<dbReference type="InterPro" id="IPR000640">
    <property type="entry name" value="EFG_V-like"/>
</dbReference>
<dbReference type="InterPro" id="IPR031157">
    <property type="entry name" value="G_TR_CS"/>
</dbReference>
<dbReference type="InterPro" id="IPR027417">
    <property type="entry name" value="P-loop_NTPase"/>
</dbReference>
<dbReference type="InterPro" id="IPR020568">
    <property type="entry name" value="Ribosomal_Su5_D2-typ_SF"/>
</dbReference>
<dbReference type="InterPro" id="IPR014721">
    <property type="entry name" value="Ribsml_uS5_D2-typ_fold_subgr"/>
</dbReference>
<dbReference type="InterPro" id="IPR005225">
    <property type="entry name" value="Small_GTP-bd"/>
</dbReference>
<dbReference type="InterPro" id="IPR000795">
    <property type="entry name" value="T_Tr_GTP-bd_dom"/>
</dbReference>
<dbReference type="InterPro" id="IPR009000">
    <property type="entry name" value="Transl_B-barrel_sf"/>
</dbReference>
<dbReference type="InterPro" id="IPR004540">
    <property type="entry name" value="Transl_elong_EFG/EF2"/>
</dbReference>
<dbReference type="InterPro" id="IPR005517">
    <property type="entry name" value="Transl_elong_EFG/EF2_IV"/>
</dbReference>
<dbReference type="NCBIfam" id="TIGR00484">
    <property type="entry name" value="EF-G"/>
    <property type="match status" value="1"/>
</dbReference>
<dbReference type="NCBIfam" id="NF009379">
    <property type="entry name" value="PRK12740.1-3"/>
    <property type="match status" value="1"/>
</dbReference>
<dbReference type="NCBIfam" id="NF009381">
    <property type="entry name" value="PRK12740.1-5"/>
    <property type="match status" value="1"/>
</dbReference>
<dbReference type="NCBIfam" id="TIGR00231">
    <property type="entry name" value="small_GTP"/>
    <property type="match status" value="1"/>
</dbReference>
<dbReference type="PANTHER" id="PTHR43261:SF1">
    <property type="entry name" value="RIBOSOME-RELEASING FACTOR 2, MITOCHONDRIAL"/>
    <property type="match status" value="1"/>
</dbReference>
<dbReference type="PANTHER" id="PTHR43261">
    <property type="entry name" value="TRANSLATION ELONGATION FACTOR G-RELATED"/>
    <property type="match status" value="1"/>
</dbReference>
<dbReference type="Pfam" id="PF22042">
    <property type="entry name" value="EF-G_D2"/>
    <property type="match status" value="1"/>
</dbReference>
<dbReference type="Pfam" id="PF00679">
    <property type="entry name" value="EFG_C"/>
    <property type="match status" value="1"/>
</dbReference>
<dbReference type="Pfam" id="PF14492">
    <property type="entry name" value="EFG_III"/>
    <property type="match status" value="1"/>
</dbReference>
<dbReference type="Pfam" id="PF03764">
    <property type="entry name" value="EFG_IV"/>
    <property type="match status" value="1"/>
</dbReference>
<dbReference type="Pfam" id="PF00009">
    <property type="entry name" value="GTP_EFTU"/>
    <property type="match status" value="1"/>
</dbReference>
<dbReference type="PRINTS" id="PR00315">
    <property type="entry name" value="ELONGATNFCT"/>
</dbReference>
<dbReference type="SMART" id="SM00838">
    <property type="entry name" value="EFG_C"/>
    <property type="match status" value="1"/>
</dbReference>
<dbReference type="SMART" id="SM00889">
    <property type="entry name" value="EFG_IV"/>
    <property type="match status" value="1"/>
</dbReference>
<dbReference type="SUPFAM" id="SSF54980">
    <property type="entry name" value="EF-G C-terminal domain-like"/>
    <property type="match status" value="2"/>
</dbReference>
<dbReference type="SUPFAM" id="SSF52540">
    <property type="entry name" value="P-loop containing nucleoside triphosphate hydrolases"/>
    <property type="match status" value="1"/>
</dbReference>
<dbReference type="SUPFAM" id="SSF54211">
    <property type="entry name" value="Ribosomal protein S5 domain 2-like"/>
    <property type="match status" value="1"/>
</dbReference>
<dbReference type="SUPFAM" id="SSF50447">
    <property type="entry name" value="Translation proteins"/>
    <property type="match status" value="1"/>
</dbReference>
<dbReference type="PROSITE" id="PS00301">
    <property type="entry name" value="G_TR_1"/>
    <property type="match status" value="1"/>
</dbReference>
<dbReference type="PROSITE" id="PS51722">
    <property type="entry name" value="G_TR_2"/>
    <property type="match status" value="1"/>
</dbReference>
<protein>
    <recommendedName>
        <fullName evidence="1">Elongation factor G</fullName>
        <shortName evidence="1">EF-G</shortName>
    </recommendedName>
</protein>
<evidence type="ECO:0000255" key="1">
    <source>
        <dbReference type="HAMAP-Rule" id="MF_00054"/>
    </source>
</evidence>
<feature type="chain" id="PRO_0000091109" description="Elongation factor G">
    <location>
        <begin position="1"/>
        <end position="688"/>
    </location>
</feature>
<feature type="domain" description="tr-type G">
    <location>
        <begin position="8"/>
        <end position="282"/>
    </location>
</feature>
<feature type="binding site" evidence="1">
    <location>
        <begin position="17"/>
        <end position="24"/>
    </location>
    <ligand>
        <name>GTP</name>
        <dbReference type="ChEBI" id="CHEBI:37565"/>
    </ligand>
</feature>
<feature type="binding site" evidence="1">
    <location>
        <begin position="81"/>
        <end position="85"/>
    </location>
    <ligand>
        <name>GTP</name>
        <dbReference type="ChEBI" id="CHEBI:37565"/>
    </ligand>
</feature>
<feature type="binding site" evidence="1">
    <location>
        <begin position="135"/>
        <end position="138"/>
    </location>
    <ligand>
        <name>GTP</name>
        <dbReference type="ChEBI" id="CHEBI:37565"/>
    </ligand>
</feature>
<name>EFG_CLOPE</name>